<reference key="1">
    <citation type="journal article" date="2008" name="Genome Biol.">
        <title>The complete genome, comparative and functional analysis of Stenotrophomonas maltophilia reveals an organism heavily shielded by drug resistance determinants.</title>
        <authorList>
            <person name="Crossman L.C."/>
            <person name="Gould V.C."/>
            <person name="Dow J.M."/>
            <person name="Vernikos G.S."/>
            <person name="Okazaki A."/>
            <person name="Sebaihia M."/>
            <person name="Saunders D."/>
            <person name="Arrowsmith C."/>
            <person name="Carver T."/>
            <person name="Peters N."/>
            <person name="Adlem E."/>
            <person name="Kerhornou A."/>
            <person name="Lord A."/>
            <person name="Murphy L."/>
            <person name="Seeger K."/>
            <person name="Squares R."/>
            <person name="Rutter S."/>
            <person name="Quail M.A."/>
            <person name="Rajandream M.A."/>
            <person name="Harris D."/>
            <person name="Churcher C."/>
            <person name="Bentley S.D."/>
            <person name="Parkhill J."/>
            <person name="Thomson N.R."/>
            <person name="Avison M.B."/>
        </authorList>
    </citation>
    <scope>NUCLEOTIDE SEQUENCE [LARGE SCALE GENOMIC DNA]</scope>
    <source>
        <strain>K279a</strain>
    </source>
</reference>
<name>PUR5_STRMK</name>
<organism>
    <name type="scientific">Stenotrophomonas maltophilia (strain K279a)</name>
    <dbReference type="NCBI Taxonomy" id="522373"/>
    <lineage>
        <taxon>Bacteria</taxon>
        <taxon>Pseudomonadati</taxon>
        <taxon>Pseudomonadota</taxon>
        <taxon>Gammaproteobacteria</taxon>
        <taxon>Lysobacterales</taxon>
        <taxon>Lysobacteraceae</taxon>
        <taxon>Stenotrophomonas</taxon>
        <taxon>Stenotrophomonas maltophilia group</taxon>
    </lineage>
</organism>
<keyword id="KW-0067">ATP-binding</keyword>
<keyword id="KW-0963">Cytoplasm</keyword>
<keyword id="KW-0436">Ligase</keyword>
<keyword id="KW-0547">Nucleotide-binding</keyword>
<keyword id="KW-0658">Purine biosynthesis</keyword>
<keyword id="KW-1185">Reference proteome</keyword>
<dbReference type="EC" id="6.3.3.1" evidence="1"/>
<dbReference type="EMBL" id="AM743169">
    <property type="protein sequence ID" value="CAQ44683.1"/>
    <property type="molecule type" value="Genomic_DNA"/>
</dbReference>
<dbReference type="RefSeq" id="WP_005412508.1">
    <property type="nucleotide sequence ID" value="NC_010943.1"/>
</dbReference>
<dbReference type="SMR" id="B2FRX8"/>
<dbReference type="EnsemblBacteria" id="CAQ44683">
    <property type="protein sequence ID" value="CAQ44683"/>
    <property type="gene ID" value="Smlt1126"/>
</dbReference>
<dbReference type="GeneID" id="93832212"/>
<dbReference type="KEGG" id="sml:Smlt1126"/>
<dbReference type="eggNOG" id="COG0150">
    <property type="taxonomic scope" value="Bacteria"/>
</dbReference>
<dbReference type="HOGENOM" id="CLU_047116_0_0_6"/>
<dbReference type="UniPathway" id="UPA00074">
    <property type="reaction ID" value="UER00129"/>
</dbReference>
<dbReference type="Proteomes" id="UP000008840">
    <property type="component" value="Chromosome"/>
</dbReference>
<dbReference type="GO" id="GO:0005829">
    <property type="term" value="C:cytosol"/>
    <property type="evidence" value="ECO:0007669"/>
    <property type="project" value="TreeGrafter"/>
</dbReference>
<dbReference type="GO" id="GO:0005524">
    <property type="term" value="F:ATP binding"/>
    <property type="evidence" value="ECO:0007669"/>
    <property type="project" value="UniProtKB-KW"/>
</dbReference>
<dbReference type="GO" id="GO:0004637">
    <property type="term" value="F:phosphoribosylamine-glycine ligase activity"/>
    <property type="evidence" value="ECO:0007669"/>
    <property type="project" value="TreeGrafter"/>
</dbReference>
<dbReference type="GO" id="GO:0004641">
    <property type="term" value="F:phosphoribosylformylglycinamidine cyclo-ligase activity"/>
    <property type="evidence" value="ECO:0007669"/>
    <property type="project" value="UniProtKB-UniRule"/>
</dbReference>
<dbReference type="GO" id="GO:0006189">
    <property type="term" value="P:'de novo' IMP biosynthetic process"/>
    <property type="evidence" value="ECO:0007669"/>
    <property type="project" value="UniProtKB-UniRule"/>
</dbReference>
<dbReference type="GO" id="GO:0046084">
    <property type="term" value="P:adenine biosynthetic process"/>
    <property type="evidence" value="ECO:0007669"/>
    <property type="project" value="TreeGrafter"/>
</dbReference>
<dbReference type="CDD" id="cd02196">
    <property type="entry name" value="PurM"/>
    <property type="match status" value="1"/>
</dbReference>
<dbReference type="FunFam" id="3.30.1330.10:FF:000001">
    <property type="entry name" value="Phosphoribosylformylglycinamidine cyclo-ligase"/>
    <property type="match status" value="1"/>
</dbReference>
<dbReference type="FunFam" id="3.90.650.10:FF:000001">
    <property type="entry name" value="Phosphoribosylformylglycinamidine cyclo-ligase"/>
    <property type="match status" value="1"/>
</dbReference>
<dbReference type="Gene3D" id="3.90.650.10">
    <property type="entry name" value="PurM-like C-terminal domain"/>
    <property type="match status" value="1"/>
</dbReference>
<dbReference type="Gene3D" id="3.30.1330.10">
    <property type="entry name" value="PurM-like, N-terminal domain"/>
    <property type="match status" value="1"/>
</dbReference>
<dbReference type="HAMAP" id="MF_00741">
    <property type="entry name" value="AIRS"/>
    <property type="match status" value="1"/>
</dbReference>
<dbReference type="InterPro" id="IPR010918">
    <property type="entry name" value="PurM-like_C_dom"/>
</dbReference>
<dbReference type="InterPro" id="IPR036676">
    <property type="entry name" value="PurM-like_C_sf"/>
</dbReference>
<dbReference type="InterPro" id="IPR016188">
    <property type="entry name" value="PurM-like_N"/>
</dbReference>
<dbReference type="InterPro" id="IPR036921">
    <property type="entry name" value="PurM-like_N_sf"/>
</dbReference>
<dbReference type="InterPro" id="IPR004733">
    <property type="entry name" value="PurM_cligase"/>
</dbReference>
<dbReference type="NCBIfam" id="TIGR00878">
    <property type="entry name" value="purM"/>
    <property type="match status" value="1"/>
</dbReference>
<dbReference type="PANTHER" id="PTHR10520:SF12">
    <property type="entry name" value="TRIFUNCTIONAL PURINE BIOSYNTHETIC PROTEIN ADENOSINE-3"/>
    <property type="match status" value="1"/>
</dbReference>
<dbReference type="PANTHER" id="PTHR10520">
    <property type="entry name" value="TRIFUNCTIONAL PURINE BIOSYNTHETIC PROTEIN ADENOSINE-3-RELATED"/>
    <property type="match status" value="1"/>
</dbReference>
<dbReference type="Pfam" id="PF00586">
    <property type="entry name" value="AIRS"/>
    <property type="match status" value="1"/>
</dbReference>
<dbReference type="Pfam" id="PF02769">
    <property type="entry name" value="AIRS_C"/>
    <property type="match status" value="1"/>
</dbReference>
<dbReference type="SUPFAM" id="SSF56042">
    <property type="entry name" value="PurM C-terminal domain-like"/>
    <property type="match status" value="1"/>
</dbReference>
<dbReference type="SUPFAM" id="SSF55326">
    <property type="entry name" value="PurM N-terminal domain-like"/>
    <property type="match status" value="1"/>
</dbReference>
<gene>
    <name evidence="1" type="primary">purM</name>
    <name type="ordered locus">Smlt1126</name>
</gene>
<evidence type="ECO:0000255" key="1">
    <source>
        <dbReference type="HAMAP-Rule" id="MF_00741"/>
    </source>
</evidence>
<accession>B2FRX8</accession>
<proteinExistence type="inferred from homology"/>
<comment type="catalytic activity">
    <reaction evidence="1">
        <text>2-formamido-N(1)-(5-O-phospho-beta-D-ribosyl)acetamidine + ATP = 5-amino-1-(5-phospho-beta-D-ribosyl)imidazole + ADP + phosphate + H(+)</text>
        <dbReference type="Rhea" id="RHEA:23032"/>
        <dbReference type="ChEBI" id="CHEBI:15378"/>
        <dbReference type="ChEBI" id="CHEBI:30616"/>
        <dbReference type="ChEBI" id="CHEBI:43474"/>
        <dbReference type="ChEBI" id="CHEBI:137981"/>
        <dbReference type="ChEBI" id="CHEBI:147287"/>
        <dbReference type="ChEBI" id="CHEBI:456216"/>
        <dbReference type="EC" id="6.3.3.1"/>
    </reaction>
</comment>
<comment type="pathway">
    <text evidence="1">Purine metabolism; IMP biosynthesis via de novo pathway; 5-amino-1-(5-phospho-D-ribosyl)imidazole from N(2)-formyl-N(1)-(5-phospho-D-ribosyl)glycinamide: step 2/2.</text>
</comment>
<comment type="subcellular location">
    <subcellularLocation>
        <location evidence="1">Cytoplasm</location>
    </subcellularLocation>
</comment>
<comment type="similarity">
    <text evidence="1">Belongs to the AIR synthase family.</text>
</comment>
<feature type="chain" id="PRO_1000193045" description="Phosphoribosylformylglycinamidine cyclo-ligase">
    <location>
        <begin position="1"/>
        <end position="352"/>
    </location>
</feature>
<sequence length="352" mass="36908">MTNTPSSAPSPLTYRDAGVDIDAGNALVERIKPLVKRSFRPEVMGGLGGFGALFDLSNKYREPVLVSGTDGVGTKLKLAHQLNRHDTIGIDLVAMCVNDVLVQGAEPLFFLDYFATGKLDIDTAAAVVGGIANGCTEAGCALIGGETAEMPDMYAPGEYDLAGFTVAAVEKSELKDGASVAAGDVLIGIASSGPHSNGYSLVRRIYDRAGRPADLELEGGVKLVDALMAPTRLYVKPILSLLKSHGEAIHGMAHITGGGLTENIIRVVPDGLGLDIQASSWTLPPVFQWLQKEGAVADSEMWRTFNCGIGFVLIVAADQVAAVSDAVKAQGLEHWTIGQVVTAEGAERVHIG</sequence>
<protein>
    <recommendedName>
        <fullName evidence="1">Phosphoribosylformylglycinamidine cyclo-ligase</fullName>
        <ecNumber evidence="1">6.3.3.1</ecNumber>
    </recommendedName>
    <alternativeName>
        <fullName evidence="1">AIR synthase</fullName>
    </alternativeName>
    <alternativeName>
        <fullName evidence="1">AIRS</fullName>
    </alternativeName>
    <alternativeName>
        <fullName evidence="1">Phosphoribosyl-aminoimidazole synthetase</fullName>
    </alternativeName>
</protein>